<accession>P67787</accession>
<accession>P08901</accession>
<keyword id="KW-0027">Amidation</keyword>
<keyword id="KW-0903">Direct protein sequencing</keyword>
<keyword id="KW-0286">Flight</keyword>
<keyword id="KW-0372">Hormone</keyword>
<keyword id="KW-0527">Neuropeptide</keyword>
<keyword id="KW-0873">Pyrrolidone carboxylic acid</keyword>
<keyword id="KW-0964">Secreted</keyword>
<proteinExistence type="evidence at protein level"/>
<comment type="function">
    <text>This hormone, released from cells in the corpora cardiaca, causes release of diglycerides from the fat body and stimulation of muscles to use these diglycerides as an energy source during energy-demanding processes.</text>
</comment>
<comment type="subcellular location">
    <subcellularLocation>
        <location>Secreted</location>
    </subcellularLocation>
</comment>
<comment type="similarity">
    <text evidence="2">Belongs to the AKH/HRTH/RPCH family.</text>
</comment>
<protein>
    <recommendedName>
        <fullName>Adipokinetic hormone</fullName>
    </recommendedName>
    <alternativeName>
        <fullName>Hez-AKH</fullName>
    </alternativeName>
</protein>
<organism>
    <name type="scientific">Helicoverpa zea</name>
    <name type="common">Corn earworm moth</name>
    <name type="synonym">Heliothis zea</name>
    <dbReference type="NCBI Taxonomy" id="7113"/>
    <lineage>
        <taxon>Eukaryota</taxon>
        <taxon>Metazoa</taxon>
        <taxon>Ecdysozoa</taxon>
        <taxon>Arthropoda</taxon>
        <taxon>Hexapoda</taxon>
        <taxon>Insecta</taxon>
        <taxon>Pterygota</taxon>
        <taxon>Neoptera</taxon>
        <taxon>Endopterygota</taxon>
        <taxon>Lepidoptera</taxon>
        <taxon>Glossata</taxon>
        <taxon>Ditrysia</taxon>
        <taxon>Noctuoidea</taxon>
        <taxon>Noctuidae</taxon>
        <taxon>Heliothinae</taxon>
        <taxon>Helicoverpa</taxon>
    </lineage>
</organism>
<sequence length="9" mass="1026">QLTFTSSWG</sequence>
<name>AKH_HELZE</name>
<feature type="peptide" id="PRO_0000043420" description="Adipokinetic hormone">
    <location>
        <begin position="1"/>
        <end position="9"/>
    </location>
</feature>
<feature type="modified residue" description="Pyrrolidone carboxylic acid" evidence="1">
    <location>
        <position position="1"/>
    </location>
</feature>
<feature type="modified residue" description="Glycine amide" evidence="1">
    <location>
        <position position="9"/>
    </location>
</feature>
<reference key="1">
    <citation type="journal article" date="1986" name="Biochem. Biophys. Res. Commun.">
        <title>Isolation and primary structure of a peptide from the corpora cardiaca of Heliothis zea with adipokinetic activity.</title>
        <authorList>
            <person name="Jaffe H."/>
            <person name="Raina A.K."/>
            <person name="Riley C.T."/>
            <person name="Fraser B.A."/>
            <person name="Holman G.M."/>
            <person name="Wagner R.M."/>
            <person name="Ridgway R.L."/>
            <person name="Hayes D.K."/>
        </authorList>
    </citation>
    <scope>PROTEIN SEQUENCE</scope>
    <scope>PYROGLUTAMATE FORMATION AT GLN-1</scope>
    <scope>AMIDATION AT GLY-9</scope>
</reference>
<evidence type="ECO:0000269" key="1">
    <source>
    </source>
</evidence>
<evidence type="ECO:0000305" key="2"/>
<dbReference type="PIR" id="A24244">
    <property type="entry name" value="A24244"/>
</dbReference>
<dbReference type="GO" id="GO:0005576">
    <property type="term" value="C:extracellular region"/>
    <property type="evidence" value="ECO:0007669"/>
    <property type="project" value="UniProtKB-SubCell"/>
</dbReference>
<dbReference type="GO" id="GO:0005179">
    <property type="term" value="F:hormone activity"/>
    <property type="evidence" value="ECO:0007669"/>
    <property type="project" value="UniProtKB-KW"/>
</dbReference>
<dbReference type="GO" id="GO:0007629">
    <property type="term" value="P:flight behavior"/>
    <property type="evidence" value="ECO:0007669"/>
    <property type="project" value="UniProtKB-KW"/>
</dbReference>
<dbReference type="GO" id="GO:0007218">
    <property type="term" value="P:neuropeptide signaling pathway"/>
    <property type="evidence" value="ECO:0007669"/>
    <property type="project" value="UniProtKB-KW"/>
</dbReference>
<dbReference type="InterPro" id="IPR002047">
    <property type="entry name" value="Adipokinetic_hormone_CS"/>
</dbReference>
<dbReference type="PROSITE" id="PS00256">
    <property type="entry name" value="AKH"/>
    <property type="match status" value="1"/>
</dbReference>